<evidence type="ECO:0000255" key="1">
    <source>
        <dbReference type="HAMAP-Rule" id="MF_01346"/>
    </source>
</evidence>
<organism>
    <name type="scientific">Streptomyces avermitilis (strain ATCC 31267 / DSM 46492 / JCM 5070 / NBRC 14893 / NCIMB 12804 / NRRL 8165 / MA-4680)</name>
    <dbReference type="NCBI Taxonomy" id="227882"/>
    <lineage>
        <taxon>Bacteria</taxon>
        <taxon>Bacillati</taxon>
        <taxon>Actinomycetota</taxon>
        <taxon>Actinomycetes</taxon>
        <taxon>Kitasatosporales</taxon>
        <taxon>Streptomycetaceae</taxon>
        <taxon>Streptomyces</taxon>
    </lineage>
</organism>
<sequence>MAELTIRPEEIRDALENFVQSYKPDAASREEVGTVTVAGDGIAKVEGLPSAMANELLKFEDGTLGLALNLEEREIGAVVLGEFSGIEEGQPVHRTGEVLSVAVGEGYLGRVVDPLGNPIDGLGEIETSGRRALELQAPTVMDRKSVHEPMETGYKAVDAMTPIGRGQRQLIIGDRQTGKTALAVDTIINQRDNWRTGDPKKQVRCIYVAIGQKGSTIASVRGALEEAGALEYTTIVAAPASDPAGFKYLAPYTGSAIGQQWMYEGKHVLIIFDDLSKQADAYRAVSLLLRRPPGREAYPGDVFYLHSRLLERCAKLSDDMGAGSMTGLPIVETKANDVSAFIPTNVISITDGQCFLESDLFNAGQRPALNVGISVSRVGGSAQHKAMRQVSGRLRVDLAQFRELEAFAAFGSDLDAASKSQLERGQRMVELLKQAQYQPMPTEDQVVSVWAGTTGKMDDVPVADIRRFEKELLEFLHRKYQGLMTSIKEGAKMSDDTLTAIADAIADFKKQFETSDGKLLGEDVPAAGK</sequence>
<proteinExistence type="inferred from homology"/>
<dbReference type="EC" id="7.1.2.2" evidence="1"/>
<dbReference type="EMBL" id="BA000030">
    <property type="protein sequence ID" value="BAC70594.1"/>
    <property type="molecule type" value="Genomic_DNA"/>
</dbReference>
<dbReference type="RefSeq" id="WP_010984315.1">
    <property type="nucleotide sequence ID" value="NZ_JZJK01000041.1"/>
</dbReference>
<dbReference type="SMR" id="Q82J82"/>
<dbReference type="GeneID" id="41539969"/>
<dbReference type="KEGG" id="sma:SAVERM_2883"/>
<dbReference type="eggNOG" id="COG0056">
    <property type="taxonomic scope" value="Bacteria"/>
</dbReference>
<dbReference type="HOGENOM" id="CLU_010091_2_1_11"/>
<dbReference type="OrthoDB" id="9803053at2"/>
<dbReference type="Proteomes" id="UP000000428">
    <property type="component" value="Chromosome"/>
</dbReference>
<dbReference type="GO" id="GO:0005886">
    <property type="term" value="C:plasma membrane"/>
    <property type="evidence" value="ECO:0007669"/>
    <property type="project" value="UniProtKB-SubCell"/>
</dbReference>
<dbReference type="GO" id="GO:0045259">
    <property type="term" value="C:proton-transporting ATP synthase complex"/>
    <property type="evidence" value="ECO:0007669"/>
    <property type="project" value="UniProtKB-KW"/>
</dbReference>
<dbReference type="GO" id="GO:0043531">
    <property type="term" value="F:ADP binding"/>
    <property type="evidence" value="ECO:0007669"/>
    <property type="project" value="TreeGrafter"/>
</dbReference>
<dbReference type="GO" id="GO:0005524">
    <property type="term" value="F:ATP binding"/>
    <property type="evidence" value="ECO:0007669"/>
    <property type="project" value="UniProtKB-UniRule"/>
</dbReference>
<dbReference type="GO" id="GO:0046933">
    <property type="term" value="F:proton-transporting ATP synthase activity, rotational mechanism"/>
    <property type="evidence" value="ECO:0007669"/>
    <property type="project" value="UniProtKB-UniRule"/>
</dbReference>
<dbReference type="CDD" id="cd18113">
    <property type="entry name" value="ATP-synt_F1_alpha_C"/>
    <property type="match status" value="1"/>
</dbReference>
<dbReference type="CDD" id="cd18116">
    <property type="entry name" value="ATP-synt_F1_alpha_N"/>
    <property type="match status" value="1"/>
</dbReference>
<dbReference type="CDD" id="cd01132">
    <property type="entry name" value="F1-ATPase_alpha_CD"/>
    <property type="match status" value="1"/>
</dbReference>
<dbReference type="FunFam" id="1.20.150.20:FF:000001">
    <property type="entry name" value="ATP synthase subunit alpha"/>
    <property type="match status" value="1"/>
</dbReference>
<dbReference type="FunFam" id="3.40.50.300:FF:000002">
    <property type="entry name" value="ATP synthase subunit alpha"/>
    <property type="match status" value="1"/>
</dbReference>
<dbReference type="Gene3D" id="2.40.30.20">
    <property type="match status" value="1"/>
</dbReference>
<dbReference type="Gene3D" id="1.20.150.20">
    <property type="entry name" value="ATP synthase alpha/beta chain, C-terminal domain"/>
    <property type="match status" value="1"/>
</dbReference>
<dbReference type="Gene3D" id="3.40.50.300">
    <property type="entry name" value="P-loop containing nucleotide triphosphate hydrolases"/>
    <property type="match status" value="1"/>
</dbReference>
<dbReference type="HAMAP" id="MF_01346">
    <property type="entry name" value="ATP_synth_alpha_bact"/>
    <property type="match status" value="1"/>
</dbReference>
<dbReference type="InterPro" id="IPR023366">
    <property type="entry name" value="ATP_synth_asu-like_sf"/>
</dbReference>
<dbReference type="InterPro" id="IPR000793">
    <property type="entry name" value="ATP_synth_asu_C"/>
</dbReference>
<dbReference type="InterPro" id="IPR038376">
    <property type="entry name" value="ATP_synth_asu_C_sf"/>
</dbReference>
<dbReference type="InterPro" id="IPR033732">
    <property type="entry name" value="ATP_synth_F1_a_nt-bd_dom"/>
</dbReference>
<dbReference type="InterPro" id="IPR005294">
    <property type="entry name" value="ATP_synth_F1_asu"/>
</dbReference>
<dbReference type="InterPro" id="IPR020003">
    <property type="entry name" value="ATPase_a/bsu_AS"/>
</dbReference>
<dbReference type="InterPro" id="IPR004100">
    <property type="entry name" value="ATPase_F1/V1/A1_a/bsu_N"/>
</dbReference>
<dbReference type="InterPro" id="IPR036121">
    <property type="entry name" value="ATPase_F1/V1/A1_a/bsu_N_sf"/>
</dbReference>
<dbReference type="InterPro" id="IPR000194">
    <property type="entry name" value="ATPase_F1/V1/A1_a/bsu_nucl-bd"/>
</dbReference>
<dbReference type="InterPro" id="IPR027417">
    <property type="entry name" value="P-loop_NTPase"/>
</dbReference>
<dbReference type="NCBIfam" id="TIGR00962">
    <property type="entry name" value="atpA"/>
    <property type="match status" value="1"/>
</dbReference>
<dbReference type="NCBIfam" id="NF009884">
    <property type="entry name" value="PRK13343.1"/>
    <property type="match status" value="1"/>
</dbReference>
<dbReference type="PANTHER" id="PTHR48082">
    <property type="entry name" value="ATP SYNTHASE SUBUNIT ALPHA, MITOCHONDRIAL"/>
    <property type="match status" value="1"/>
</dbReference>
<dbReference type="PANTHER" id="PTHR48082:SF2">
    <property type="entry name" value="ATP SYNTHASE SUBUNIT ALPHA, MITOCHONDRIAL"/>
    <property type="match status" value="1"/>
</dbReference>
<dbReference type="Pfam" id="PF00006">
    <property type="entry name" value="ATP-synt_ab"/>
    <property type="match status" value="1"/>
</dbReference>
<dbReference type="Pfam" id="PF00306">
    <property type="entry name" value="ATP-synt_ab_C"/>
    <property type="match status" value="1"/>
</dbReference>
<dbReference type="Pfam" id="PF02874">
    <property type="entry name" value="ATP-synt_ab_N"/>
    <property type="match status" value="1"/>
</dbReference>
<dbReference type="SUPFAM" id="SSF47917">
    <property type="entry name" value="C-terminal domain of alpha and beta subunits of F1 ATP synthase"/>
    <property type="match status" value="1"/>
</dbReference>
<dbReference type="SUPFAM" id="SSF50615">
    <property type="entry name" value="N-terminal domain of alpha and beta subunits of F1 ATP synthase"/>
    <property type="match status" value="1"/>
</dbReference>
<dbReference type="SUPFAM" id="SSF52540">
    <property type="entry name" value="P-loop containing nucleoside triphosphate hydrolases"/>
    <property type="match status" value="1"/>
</dbReference>
<dbReference type="PROSITE" id="PS00152">
    <property type="entry name" value="ATPASE_ALPHA_BETA"/>
    <property type="match status" value="1"/>
</dbReference>
<protein>
    <recommendedName>
        <fullName evidence="1">ATP synthase subunit alpha</fullName>
        <ecNumber evidence="1">7.1.2.2</ecNumber>
    </recommendedName>
    <alternativeName>
        <fullName evidence="1">ATP synthase F1 sector subunit alpha</fullName>
    </alternativeName>
    <alternativeName>
        <fullName evidence="1">F-ATPase subunit alpha</fullName>
    </alternativeName>
</protein>
<gene>
    <name evidence="1" type="primary">atpA</name>
    <name type="ordered locus">SAV_2883</name>
</gene>
<feature type="chain" id="PRO_0000238373" description="ATP synthase subunit alpha">
    <location>
        <begin position="1"/>
        <end position="529"/>
    </location>
</feature>
<feature type="binding site" evidence="1">
    <location>
        <begin position="173"/>
        <end position="180"/>
    </location>
    <ligand>
        <name>ATP</name>
        <dbReference type="ChEBI" id="CHEBI:30616"/>
    </ligand>
</feature>
<feature type="site" description="Required for activity" evidence="1">
    <location>
        <position position="374"/>
    </location>
</feature>
<name>ATPA_STRAW</name>
<reference key="1">
    <citation type="journal article" date="2001" name="Proc. Natl. Acad. Sci. U.S.A.">
        <title>Genome sequence of an industrial microorganism Streptomyces avermitilis: deducing the ability of producing secondary metabolites.</title>
        <authorList>
            <person name="Omura S."/>
            <person name="Ikeda H."/>
            <person name="Ishikawa J."/>
            <person name="Hanamoto A."/>
            <person name="Takahashi C."/>
            <person name="Shinose M."/>
            <person name="Takahashi Y."/>
            <person name="Horikawa H."/>
            <person name="Nakazawa H."/>
            <person name="Osonoe T."/>
            <person name="Kikuchi H."/>
            <person name="Shiba T."/>
            <person name="Sakaki Y."/>
            <person name="Hattori M."/>
        </authorList>
    </citation>
    <scope>NUCLEOTIDE SEQUENCE [LARGE SCALE GENOMIC DNA]</scope>
    <source>
        <strain>ATCC 31267 / DSM 46492 / JCM 5070 / NBRC 14893 / NCIMB 12804 / NRRL 8165 / MA-4680</strain>
    </source>
</reference>
<reference key="2">
    <citation type="journal article" date="2003" name="Nat. Biotechnol.">
        <title>Complete genome sequence and comparative analysis of the industrial microorganism Streptomyces avermitilis.</title>
        <authorList>
            <person name="Ikeda H."/>
            <person name="Ishikawa J."/>
            <person name="Hanamoto A."/>
            <person name="Shinose M."/>
            <person name="Kikuchi H."/>
            <person name="Shiba T."/>
            <person name="Sakaki Y."/>
            <person name="Hattori M."/>
            <person name="Omura S."/>
        </authorList>
    </citation>
    <scope>NUCLEOTIDE SEQUENCE [LARGE SCALE GENOMIC DNA]</scope>
    <source>
        <strain>ATCC 31267 / DSM 46492 / JCM 5070 / NBRC 14893 / NCIMB 12804 / NRRL 8165 / MA-4680</strain>
    </source>
</reference>
<accession>Q82J82</accession>
<comment type="function">
    <text evidence="1">Produces ATP from ADP in the presence of a proton gradient across the membrane. The alpha chain is a regulatory subunit.</text>
</comment>
<comment type="catalytic activity">
    <reaction evidence="1">
        <text>ATP + H2O + 4 H(+)(in) = ADP + phosphate + 5 H(+)(out)</text>
        <dbReference type="Rhea" id="RHEA:57720"/>
        <dbReference type="ChEBI" id="CHEBI:15377"/>
        <dbReference type="ChEBI" id="CHEBI:15378"/>
        <dbReference type="ChEBI" id="CHEBI:30616"/>
        <dbReference type="ChEBI" id="CHEBI:43474"/>
        <dbReference type="ChEBI" id="CHEBI:456216"/>
        <dbReference type="EC" id="7.1.2.2"/>
    </reaction>
</comment>
<comment type="subunit">
    <text evidence="1">F-type ATPases have 2 components, CF(1) - the catalytic core - and CF(0) - the membrane proton channel. CF(1) has five subunits: alpha(3), beta(3), gamma(1), delta(1), epsilon(1). CF(0) has three main subunits: a(1), b(2) and c(9-12). The alpha and beta chains form an alternating ring which encloses part of the gamma chain. CF(1) is attached to CF(0) by a central stalk formed by the gamma and epsilon chains, while a peripheral stalk is formed by the delta and b chains.</text>
</comment>
<comment type="subcellular location">
    <subcellularLocation>
        <location evidence="1">Cell membrane</location>
        <topology evidence="1">Peripheral membrane protein</topology>
    </subcellularLocation>
</comment>
<comment type="similarity">
    <text evidence="1">Belongs to the ATPase alpha/beta chains family.</text>
</comment>
<keyword id="KW-0066">ATP synthesis</keyword>
<keyword id="KW-0067">ATP-binding</keyword>
<keyword id="KW-1003">Cell membrane</keyword>
<keyword id="KW-0139">CF(1)</keyword>
<keyword id="KW-0375">Hydrogen ion transport</keyword>
<keyword id="KW-0406">Ion transport</keyword>
<keyword id="KW-0472">Membrane</keyword>
<keyword id="KW-0547">Nucleotide-binding</keyword>
<keyword id="KW-1185">Reference proteome</keyword>
<keyword id="KW-1278">Translocase</keyword>
<keyword id="KW-0813">Transport</keyword>